<protein>
    <recommendedName>
        <fullName>P2Y purinoceptor 1</fullName>
        <shortName>P2Y1</shortName>
    </recommendedName>
    <alternativeName>
        <fullName>ATP receptor</fullName>
    </alternativeName>
    <alternativeName>
        <fullName>Purinergic receptor</fullName>
    </alternativeName>
</protein>
<name>P2RY1_RAT</name>
<proteinExistence type="evidence at transcript level"/>
<reference key="1">
    <citation type="journal article" date="1995" name="Biochem. Biophys. Res. Commun.">
        <title>Cloning of rat and mouse P2Y purinoceptors.</title>
        <authorList>
            <person name="Tokuyama Y."/>
            <person name="Hara M."/>
            <person name="Jones E.M.C."/>
            <person name="Fan Z."/>
            <person name="Bell G.I."/>
        </authorList>
    </citation>
    <scope>NUCLEOTIDE SEQUENCE [MRNA]</scope>
    <scope>FUNCTION</scope>
    <scope>SUBCELLULAR LOCATION</scope>
    <source>
        <tissue>Insulinoma</tissue>
    </source>
</reference>
<sequence length="373" mass="42322">MTEVPWSAVPNGTDAAFLAGLGSLWGNSTIASTAAVSSSFRCALIKTGFQFYYLPAVYILVFIIGFLGNSVAIWMFVFHMKPWSGISVYMFNLALADFLYVLTLPALIFYYFNKTDWIFGDVMCKLQRFIFHVNLYGSILFLTCISAHRYSGVVYPLKSLGRLKKKNAIYVSVLVWLIVVVAISPILFYSGTGIRKNKTVTCYDSTSDEYLRSYFIYSMCTTVAMFCIPLVLILGCYGLIVRALIYKDLDNSPLRRKSIYLVIIVLTVFAVSYIPFHVMKTMNLRARLDFQTPEMCDFNDRVYATYQVTRGLASLNSCVDPILYFLAGDTFRRRLSRATRKASRRSEANLQSKSEEMTLNILSEFKQNGDTSL</sequence>
<keyword id="KW-0067">ATP-binding</keyword>
<keyword id="KW-1003">Cell membrane</keyword>
<keyword id="KW-1015">Disulfide bond</keyword>
<keyword id="KW-0297">G-protein coupled receptor</keyword>
<keyword id="KW-0325">Glycoprotein</keyword>
<keyword id="KW-0472">Membrane</keyword>
<keyword id="KW-0547">Nucleotide-binding</keyword>
<keyword id="KW-0675">Receptor</keyword>
<keyword id="KW-1185">Reference proteome</keyword>
<keyword id="KW-0807">Transducer</keyword>
<keyword id="KW-0812">Transmembrane</keyword>
<keyword id="KW-1133">Transmembrane helix</keyword>
<organism>
    <name type="scientific">Rattus norvegicus</name>
    <name type="common">Rat</name>
    <dbReference type="NCBI Taxonomy" id="10116"/>
    <lineage>
        <taxon>Eukaryota</taxon>
        <taxon>Metazoa</taxon>
        <taxon>Chordata</taxon>
        <taxon>Craniata</taxon>
        <taxon>Vertebrata</taxon>
        <taxon>Euteleostomi</taxon>
        <taxon>Mammalia</taxon>
        <taxon>Eutheria</taxon>
        <taxon>Euarchontoglires</taxon>
        <taxon>Glires</taxon>
        <taxon>Rodentia</taxon>
        <taxon>Myomorpha</taxon>
        <taxon>Muroidea</taxon>
        <taxon>Muridae</taxon>
        <taxon>Murinae</taxon>
        <taxon>Rattus</taxon>
    </lineage>
</organism>
<gene>
    <name type="primary">P2ry1</name>
</gene>
<accession>P49651</accession>
<comment type="function">
    <text evidence="2 5">Receptor for extracellular adenine nucleotides such as ADP (PubMed:7779087). In platelets, binding to ADP leads to mobilization of intracellular calcium ions via activation of phospholipase C, a change in platelet shape, and ultimately platelet aggregation (By similarity).</text>
</comment>
<comment type="subcellular location">
    <subcellularLocation>
        <location evidence="5">Cell membrane</location>
        <topology evidence="1">Multi-pass membrane protein</topology>
    </subcellularLocation>
</comment>
<comment type="tissue specificity">
    <text>Expressed in muscle, heart, liver, kidney, lung, brain, spleen, but not in testis.</text>
</comment>
<comment type="similarity">
    <text evidence="4">Belongs to the G-protein coupled receptor 1 family.</text>
</comment>
<dbReference type="EMBL" id="U22830">
    <property type="protein sequence ID" value="AAA91303.1"/>
    <property type="molecule type" value="mRNA"/>
</dbReference>
<dbReference type="RefSeq" id="NP_036932.1">
    <property type="nucleotide sequence ID" value="NM_012800.3"/>
</dbReference>
<dbReference type="SMR" id="P49651"/>
<dbReference type="BioGRID" id="247305">
    <property type="interactions" value="2"/>
</dbReference>
<dbReference type="CORUM" id="P49651"/>
<dbReference type="FunCoup" id="P49651">
    <property type="interactions" value="954"/>
</dbReference>
<dbReference type="MINT" id="P49651"/>
<dbReference type="STRING" id="10116.ENSRNOP00000019304"/>
<dbReference type="BindingDB" id="P49651"/>
<dbReference type="ChEMBL" id="CHEMBL2497"/>
<dbReference type="GuidetoPHARMACOLOGY" id="323"/>
<dbReference type="GlyCosmos" id="P49651">
    <property type="glycosylation" value="4 sites, No reported glycans"/>
</dbReference>
<dbReference type="GlyGen" id="P49651">
    <property type="glycosylation" value="4 sites"/>
</dbReference>
<dbReference type="PhosphoSitePlus" id="P49651"/>
<dbReference type="PaxDb" id="10116-ENSRNOP00000019304"/>
<dbReference type="Ensembl" id="ENSRNOT00000019305.5">
    <property type="protein sequence ID" value="ENSRNOP00000019304.3"/>
    <property type="gene ID" value="ENSRNOG00000014232.5"/>
</dbReference>
<dbReference type="GeneID" id="25265"/>
<dbReference type="KEGG" id="rno:25265"/>
<dbReference type="UCSC" id="RGD:3242">
    <property type="organism name" value="rat"/>
</dbReference>
<dbReference type="AGR" id="RGD:3242"/>
<dbReference type="CTD" id="5028"/>
<dbReference type="RGD" id="3242">
    <property type="gene designation" value="P2ry1"/>
</dbReference>
<dbReference type="eggNOG" id="ENOG502QWPV">
    <property type="taxonomic scope" value="Eukaryota"/>
</dbReference>
<dbReference type="GeneTree" id="ENSGT01030000234621"/>
<dbReference type="HOGENOM" id="CLU_009579_8_2_1"/>
<dbReference type="InParanoid" id="P49651"/>
<dbReference type="OMA" id="GFCVPFI"/>
<dbReference type="OrthoDB" id="8190652at2759"/>
<dbReference type="PhylomeDB" id="P49651"/>
<dbReference type="TreeFam" id="TF350009"/>
<dbReference type="Reactome" id="R-RNO-416476">
    <property type="pathway name" value="G alpha (q) signalling events"/>
</dbReference>
<dbReference type="Reactome" id="R-RNO-417957">
    <property type="pathway name" value="P2Y receptors"/>
</dbReference>
<dbReference type="Reactome" id="R-RNO-418592">
    <property type="pathway name" value="ADP signalling through P2Y purinoceptor 1"/>
</dbReference>
<dbReference type="PRO" id="PR:P49651"/>
<dbReference type="Proteomes" id="UP000002494">
    <property type="component" value="Chromosome 2"/>
</dbReference>
<dbReference type="Bgee" id="ENSRNOG00000014232">
    <property type="expression patterns" value="Expressed in quadriceps femoris and 18 other cell types or tissues"/>
</dbReference>
<dbReference type="GO" id="GO:0016324">
    <property type="term" value="C:apical plasma membrane"/>
    <property type="evidence" value="ECO:0000314"/>
    <property type="project" value="RGD"/>
</dbReference>
<dbReference type="GO" id="GO:0016323">
    <property type="term" value="C:basolateral plasma membrane"/>
    <property type="evidence" value="ECO:0000314"/>
    <property type="project" value="RGD"/>
</dbReference>
<dbReference type="GO" id="GO:0044297">
    <property type="term" value="C:cell body"/>
    <property type="evidence" value="ECO:0000314"/>
    <property type="project" value="BHF-UCL"/>
</dbReference>
<dbReference type="GO" id="GO:0005929">
    <property type="term" value="C:cilium"/>
    <property type="evidence" value="ECO:0000266"/>
    <property type="project" value="RGD"/>
</dbReference>
<dbReference type="GO" id="GO:0030425">
    <property type="term" value="C:dendrite"/>
    <property type="evidence" value="ECO:0000314"/>
    <property type="project" value="BHF-UCL"/>
</dbReference>
<dbReference type="GO" id="GO:0098978">
    <property type="term" value="C:glutamatergic synapse"/>
    <property type="evidence" value="ECO:0000314"/>
    <property type="project" value="SynGO"/>
</dbReference>
<dbReference type="GO" id="GO:0005886">
    <property type="term" value="C:plasma membrane"/>
    <property type="evidence" value="ECO:0000314"/>
    <property type="project" value="BHF-UCL"/>
</dbReference>
<dbReference type="GO" id="GO:0014069">
    <property type="term" value="C:postsynaptic density"/>
    <property type="evidence" value="ECO:0000314"/>
    <property type="project" value="BHF-UCL"/>
</dbReference>
<dbReference type="GO" id="GO:0045211">
    <property type="term" value="C:postsynaptic membrane"/>
    <property type="evidence" value="ECO:0000314"/>
    <property type="project" value="BHF-UCL"/>
</dbReference>
<dbReference type="GO" id="GO:0048787">
    <property type="term" value="C:presynaptic active zone membrane"/>
    <property type="evidence" value="ECO:0000314"/>
    <property type="project" value="SynGO"/>
</dbReference>
<dbReference type="GO" id="GO:0031686">
    <property type="term" value="F:A1 adenosine receptor binding"/>
    <property type="evidence" value="ECO:0000353"/>
    <property type="project" value="BHF-UCL"/>
</dbReference>
<dbReference type="GO" id="GO:0043531">
    <property type="term" value="F:ADP binding"/>
    <property type="evidence" value="ECO:0000314"/>
    <property type="project" value="RGD"/>
</dbReference>
<dbReference type="GO" id="GO:0005524">
    <property type="term" value="F:ATP binding"/>
    <property type="evidence" value="ECO:0000314"/>
    <property type="project" value="RGD"/>
</dbReference>
<dbReference type="GO" id="GO:0001621">
    <property type="term" value="F:G protein-coupled ADP receptor activity"/>
    <property type="evidence" value="ECO:0000314"/>
    <property type="project" value="BHF-UCL"/>
</dbReference>
<dbReference type="GO" id="GO:0045031">
    <property type="term" value="F:G protein-coupled ATP receptor activity"/>
    <property type="evidence" value="ECO:0000314"/>
    <property type="project" value="BHF-UCL"/>
</dbReference>
<dbReference type="GO" id="GO:0045028">
    <property type="term" value="F:G protein-coupled purinergic nucleotide receptor activity"/>
    <property type="evidence" value="ECO:0000314"/>
    <property type="project" value="BHF-UCL"/>
</dbReference>
<dbReference type="GO" id="GO:0046982">
    <property type="term" value="F:protein heterodimerization activity"/>
    <property type="evidence" value="ECO:0000353"/>
    <property type="project" value="BHF-UCL"/>
</dbReference>
<dbReference type="GO" id="GO:0097110">
    <property type="term" value="F:scaffold protein binding"/>
    <property type="evidence" value="ECO:0000353"/>
    <property type="project" value="BHF-UCL"/>
</dbReference>
<dbReference type="GO" id="GO:0030545">
    <property type="term" value="F:signaling receptor regulator activity"/>
    <property type="evidence" value="ECO:0000314"/>
    <property type="project" value="BHF-UCL"/>
</dbReference>
<dbReference type="GO" id="GO:0007193">
    <property type="term" value="P:adenylate cyclase-inhibiting G protein-coupled receptor signaling pathway"/>
    <property type="evidence" value="ECO:0000314"/>
    <property type="project" value="BHF-UCL"/>
</dbReference>
<dbReference type="GO" id="GO:0097746">
    <property type="term" value="P:blood vessel diameter maintenance"/>
    <property type="evidence" value="ECO:0000315"/>
    <property type="project" value="RGD"/>
</dbReference>
<dbReference type="GO" id="GO:0071415">
    <property type="term" value="P:cellular response to purine-containing compound"/>
    <property type="evidence" value="ECO:0000250"/>
    <property type="project" value="UniProtKB"/>
</dbReference>
<dbReference type="GO" id="GO:0042755">
    <property type="term" value="P:eating behavior"/>
    <property type="evidence" value="ECO:0000315"/>
    <property type="project" value="RGD"/>
</dbReference>
<dbReference type="GO" id="GO:0051649">
    <property type="term" value="P:establishment of localization in cell"/>
    <property type="evidence" value="ECO:0000266"/>
    <property type="project" value="RGD"/>
</dbReference>
<dbReference type="GO" id="GO:0001973">
    <property type="term" value="P:G protein-coupled adenosine receptor signaling pathway"/>
    <property type="evidence" value="ECO:0000314"/>
    <property type="project" value="BHF-UCL"/>
</dbReference>
<dbReference type="GO" id="GO:0035589">
    <property type="term" value="P:G protein-coupled purinergic nucleotide receptor signaling pathway"/>
    <property type="evidence" value="ECO:0000314"/>
    <property type="project" value="BHF-UCL"/>
</dbReference>
<dbReference type="GO" id="GO:0007186">
    <property type="term" value="P:G protein-coupled receptor signaling pathway"/>
    <property type="evidence" value="ECO:0000314"/>
    <property type="project" value="BHF-UCL"/>
</dbReference>
<dbReference type="GO" id="GO:0008347">
    <property type="term" value="P:glial cell migration"/>
    <property type="evidence" value="ECO:0000315"/>
    <property type="project" value="RGD"/>
</dbReference>
<dbReference type="GO" id="GO:0006811">
    <property type="term" value="P:monoatomic ion transport"/>
    <property type="evidence" value="ECO:0000266"/>
    <property type="project" value="RGD"/>
</dbReference>
<dbReference type="GO" id="GO:0010700">
    <property type="term" value="P:negative regulation of norepinephrine secretion"/>
    <property type="evidence" value="ECO:0000314"/>
    <property type="project" value="RGD"/>
</dbReference>
<dbReference type="GO" id="GO:0007200">
    <property type="term" value="P:phospholipase C-activating G protein-coupled receptor signaling pathway"/>
    <property type="evidence" value="ECO:0000250"/>
    <property type="project" value="UniProtKB"/>
</dbReference>
<dbReference type="GO" id="GO:0030168">
    <property type="term" value="P:platelet activation"/>
    <property type="evidence" value="ECO:0007669"/>
    <property type="project" value="InterPro"/>
</dbReference>
<dbReference type="GO" id="GO:0007204">
    <property type="term" value="P:positive regulation of cytosolic calcium ion concentration"/>
    <property type="evidence" value="ECO:0000314"/>
    <property type="project" value="BHF-UCL"/>
</dbReference>
<dbReference type="GO" id="GO:0070374">
    <property type="term" value="P:positive regulation of ERK1 and ERK2 cascade"/>
    <property type="evidence" value="ECO:0000314"/>
    <property type="project" value="BHF-UCL"/>
</dbReference>
<dbReference type="GO" id="GO:0046887">
    <property type="term" value="P:positive regulation of hormone secretion"/>
    <property type="evidence" value="ECO:0000314"/>
    <property type="project" value="RGD"/>
</dbReference>
<dbReference type="GO" id="GO:0032962">
    <property type="term" value="P:positive regulation of inositol trisphosphate biosynthetic process"/>
    <property type="evidence" value="ECO:0000314"/>
    <property type="project" value="BHF-UCL"/>
</dbReference>
<dbReference type="GO" id="GO:0043270">
    <property type="term" value="P:positive regulation of monoatomic ion transport"/>
    <property type="evidence" value="ECO:0000266"/>
    <property type="project" value="RGD"/>
</dbReference>
<dbReference type="GO" id="GO:0060406">
    <property type="term" value="P:positive regulation of penile erection"/>
    <property type="evidence" value="ECO:0000314"/>
    <property type="project" value="RGD"/>
</dbReference>
<dbReference type="GO" id="GO:0045944">
    <property type="term" value="P:positive regulation of transcription by RNA polymerase II"/>
    <property type="evidence" value="ECO:0000314"/>
    <property type="project" value="BHF-UCL"/>
</dbReference>
<dbReference type="GO" id="GO:0072659">
    <property type="term" value="P:protein localization to plasma membrane"/>
    <property type="evidence" value="ECO:0000314"/>
    <property type="project" value="BHF-UCL"/>
</dbReference>
<dbReference type="GO" id="GO:0008360">
    <property type="term" value="P:regulation of cell shape"/>
    <property type="evidence" value="ECO:0000250"/>
    <property type="project" value="UniProtKB"/>
</dbReference>
<dbReference type="GO" id="GO:0099509">
    <property type="term" value="P:regulation of presynaptic cytosolic calcium ion concentration"/>
    <property type="evidence" value="ECO:0000314"/>
    <property type="project" value="SynGO"/>
</dbReference>
<dbReference type="GO" id="GO:2000300">
    <property type="term" value="P:regulation of synaptic vesicle exocytosis"/>
    <property type="evidence" value="ECO:0000314"/>
    <property type="project" value="SynGO"/>
</dbReference>
<dbReference type="GO" id="GO:0090075">
    <property type="term" value="P:relaxation of muscle"/>
    <property type="evidence" value="ECO:0007669"/>
    <property type="project" value="InterPro"/>
</dbReference>
<dbReference type="GO" id="GO:0070848">
    <property type="term" value="P:response to growth factor"/>
    <property type="evidence" value="ECO:0000270"/>
    <property type="project" value="RGD"/>
</dbReference>
<dbReference type="GO" id="GO:0009612">
    <property type="term" value="P:response to mechanical stimulus"/>
    <property type="evidence" value="ECO:0000315"/>
    <property type="project" value="RGD"/>
</dbReference>
<dbReference type="GO" id="GO:0023019">
    <property type="term" value="P:signal transduction involved in regulation of gene expression"/>
    <property type="evidence" value="ECO:0000314"/>
    <property type="project" value="BHF-UCL"/>
</dbReference>
<dbReference type="CDD" id="cd15377">
    <property type="entry name" value="7tmA_P2Y1"/>
    <property type="match status" value="1"/>
</dbReference>
<dbReference type="FunFam" id="1.20.1070.10:FF:000017">
    <property type="entry name" value="lysophosphatidic acid receptor 4"/>
    <property type="match status" value="1"/>
</dbReference>
<dbReference type="Gene3D" id="1.20.1070.10">
    <property type="entry name" value="Rhodopsin 7-helix transmembrane proteins"/>
    <property type="match status" value="1"/>
</dbReference>
<dbReference type="InterPro" id="IPR000276">
    <property type="entry name" value="GPCR_Rhodpsn"/>
</dbReference>
<dbReference type="InterPro" id="IPR017452">
    <property type="entry name" value="GPCR_Rhodpsn_7TM"/>
</dbReference>
<dbReference type="InterPro" id="IPR000142">
    <property type="entry name" value="P2Y1_rcpt"/>
</dbReference>
<dbReference type="PANTHER" id="PTHR24231:SF2">
    <property type="entry name" value="P2Y PURINOCEPTOR 1"/>
    <property type="match status" value="1"/>
</dbReference>
<dbReference type="PANTHER" id="PTHR24231">
    <property type="entry name" value="PURINOCEPTOR-RELATED G-PROTEIN COUPLED RECEPTOR"/>
    <property type="match status" value="1"/>
</dbReference>
<dbReference type="Pfam" id="PF00001">
    <property type="entry name" value="7tm_1"/>
    <property type="match status" value="1"/>
</dbReference>
<dbReference type="PRINTS" id="PR00237">
    <property type="entry name" value="GPCRRHODOPSN"/>
</dbReference>
<dbReference type="PRINTS" id="PR00595">
    <property type="entry name" value="P2Y1PRNOCPTR"/>
</dbReference>
<dbReference type="PRINTS" id="PR01157">
    <property type="entry name" value="P2YPURNOCPTR"/>
</dbReference>
<dbReference type="SUPFAM" id="SSF81321">
    <property type="entry name" value="Family A G protein-coupled receptor-like"/>
    <property type="match status" value="1"/>
</dbReference>
<dbReference type="PROSITE" id="PS00237">
    <property type="entry name" value="G_PROTEIN_RECEP_F1_1"/>
    <property type="match status" value="1"/>
</dbReference>
<dbReference type="PROSITE" id="PS50262">
    <property type="entry name" value="G_PROTEIN_RECEP_F1_2"/>
    <property type="match status" value="1"/>
</dbReference>
<evidence type="ECO:0000250" key="1">
    <source>
        <dbReference type="UniProtKB" id="P47900"/>
    </source>
</evidence>
<evidence type="ECO:0000250" key="2">
    <source>
        <dbReference type="UniProtKB" id="P49650"/>
    </source>
</evidence>
<evidence type="ECO:0000255" key="3"/>
<evidence type="ECO:0000255" key="4">
    <source>
        <dbReference type="PROSITE-ProRule" id="PRU00521"/>
    </source>
</evidence>
<evidence type="ECO:0000269" key="5">
    <source>
    </source>
</evidence>
<evidence type="ECO:0000305" key="6"/>
<feature type="chain" id="PRO_0000070008" description="P2Y purinoceptor 1">
    <location>
        <begin position="1"/>
        <end position="373"/>
    </location>
</feature>
<feature type="topological domain" description="Extracellular" evidence="6">
    <location>
        <begin position="1"/>
        <end position="51"/>
    </location>
</feature>
<feature type="transmembrane region" description="Helical; Name=1" evidence="1">
    <location>
        <begin position="52"/>
        <end position="74"/>
    </location>
</feature>
<feature type="topological domain" description="Cytoplasmic" evidence="6">
    <location>
        <begin position="75"/>
        <end position="87"/>
    </location>
</feature>
<feature type="transmembrane region" description="Helical; Name=2" evidence="1">
    <location>
        <begin position="88"/>
        <end position="109"/>
    </location>
</feature>
<feature type="topological domain" description="Extracellular" evidence="6">
    <location>
        <begin position="110"/>
        <end position="125"/>
    </location>
</feature>
<feature type="transmembrane region" description="Helical; Name=3" evidence="1">
    <location>
        <begin position="126"/>
        <end position="147"/>
    </location>
</feature>
<feature type="topological domain" description="Cytoplasmic" evidence="6">
    <location>
        <begin position="148"/>
        <end position="166"/>
    </location>
</feature>
<feature type="transmembrane region" description="Helical; Name=4" evidence="1">
    <location>
        <begin position="167"/>
        <end position="188"/>
    </location>
</feature>
<feature type="topological domain" description="Extracellular" evidence="6">
    <location>
        <begin position="189"/>
        <end position="214"/>
    </location>
</feature>
<feature type="transmembrane region" description="Helical; Name=5" evidence="1">
    <location>
        <begin position="215"/>
        <end position="237"/>
    </location>
</feature>
<feature type="topological domain" description="Cytoplasmic" evidence="6">
    <location>
        <begin position="238"/>
        <end position="260"/>
    </location>
</feature>
<feature type="transmembrane region" description="Helical; Name=6" evidence="1">
    <location>
        <begin position="261"/>
        <end position="284"/>
    </location>
</feature>
<feature type="topological domain" description="Extracellular" evidence="6">
    <location>
        <begin position="285"/>
        <end position="303"/>
    </location>
</feature>
<feature type="transmembrane region" description="Helical; Name=7" evidence="1">
    <location>
        <begin position="304"/>
        <end position="325"/>
    </location>
</feature>
<feature type="topological domain" description="Cytoplasmic" evidence="6">
    <location>
        <begin position="326"/>
        <end position="373"/>
    </location>
</feature>
<feature type="binding site" evidence="1">
    <location>
        <position position="46"/>
    </location>
    <ligand>
        <name>ADP</name>
        <dbReference type="ChEBI" id="CHEBI:456216"/>
    </ligand>
</feature>
<feature type="binding site" evidence="1">
    <location>
        <begin position="203"/>
        <end position="205"/>
    </location>
    <ligand>
        <name>ADP</name>
        <dbReference type="ChEBI" id="CHEBI:456216"/>
    </ligand>
</feature>
<feature type="binding site" evidence="1">
    <location>
        <begin position="283"/>
        <end position="287"/>
    </location>
    <ligand>
        <name>ADP</name>
        <dbReference type="ChEBI" id="CHEBI:456216"/>
    </ligand>
</feature>
<feature type="binding site" evidence="1">
    <location>
        <begin position="303"/>
        <end position="306"/>
    </location>
    <ligand>
        <name>ADP</name>
        <dbReference type="ChEBI" id="CHEBI:456216"/>
    </ligand>
</feature>
<feature type="binding site" evidence="1">
    <location>
        <position position="310"/>
    </location>
    <ligand>
        <name>ADP</name>
        <dbReference type="ChEBI" id="CHEBI:456216"/>
    </ligand>
</feature>
<feature type="glycosylation site" description="N-linked (GlcNAc...) asparagine" evidence="3">
    <location>
        <position position="11"/>
    </location>
</feature>
<feature type="glycosylation site" description="N-linked (GlcNAc...) asparagine" evidence="3">
    <location>
        <position position="27"/>
    </location>
</feature>
<feature type="glycosylation site" description="N-linked (GlcNAc...) asparagine" evidence="3">
    <location>
        <position position="113"/>
    </location>
</feature>
<feature type="glycosylation site" description="N-linked (GlcNAc...) asparagine" evidence="3">
    <location>
        <position position="197"/>
    </location>
</feature>
<feature type="disulfide bond" evidence="1">
    <location>
        <begin position="42"/>
        <end position="296"/>
    </location>
</feature>
<feature type="disulfide bond" evidence="4">
    <location>
        <begin position="124"/>
        <end position="202"/>
    </location>
</feature>